<feature type="chain" id="PRO_1000089303" description="Adenylosuccinate synthetase">
    <location>
        <begin position="1"/>
        <end position="411"/>
    </location>
</feature>
<feature type="active site" description="Proton acceptor" evidence="1">
    <location>
        <position position="12"/>
    </location>
</feature>
<feature type="active site" description="Proton donor" evidence="1">
    <location>
        <position position="40"/>
    </location>
</feature>
<feature type="binding site" evidence="1">
    <location>
        <begin position="11"/>
        <end position="17"/>
    </location>
    <ligand>
        <name>GTP</name>
        <dbReference type="ChEBI" id="CHEBI:37565"/>
    </ligand>
</feature>
<feature type="binding site" description="in other chain" evidence="1">
    <location>
        <begin position="12"/>
        <end position="15"/>
    </location>
    <ligand>
        <name>IMP</name>
        <dbReference type="ChEBI" id="CHEBI:58053"/>
        <note>ligand shared between dimeric partners</note>
    </ligand>
</feature>
<feature type="binding site" evidence="1">
    <location>
        <position position="12"/>
    </location>
    <ligand>
        <name>Mg(2+)</name>
        <dbReference type="ChEBI" id="CHEBI:18420"/>
    </ligand>
</feature>
<feature type="binding site" description="in other chain" evidence="1">
    <location>
        <begin position="37"/>
        <end position="40"/>
    </location>
    <ligand>
        <name>IMP</name>
        <dbReference type="ChEBI" id="CHEBI:58053"/>
        <note>ligand shared between dimeric partners</note>
    </ligand>
</feature>
<feature type="binding site" evidence="1">
    <location>
        <begin position="39"/>
        <end position="41"/>
    </location>
    <ligand>
        <name>GTP</name>
        <dbReference type="ChEBI" id="CHEBI:37565"/>
    </ligand>
</feature>
<feature type="binding site" evidence="1">
    <location>
        <position position="39"/>
    </location>
    <ligand>
        <name>Mg(2+)</name>
        <dbReference type="ChEBI" id="CHEBI:18420"/>
    </ligand>
</feature>
<feature type="binding site" description="in other chain" evidence="1">
    <location>
        <position position="121"/>
    </location>
    <ligand>
        <name>IMP</name>
        <dbReference type="ChEBI" id="CHEBI:58053"/>
        <note>ligand shared between dimeric partners</note>
    </ligand>
</feature>
<feature type="binding site" evidence="1">
    <location>
        <position position="135"/>
    </location>
    <ligand>
        <name>IMP</name>
        <dbReference type="ChEBI" id="CHEBI:58053"/>
        <note>ligand shared between dimeric partners</note>
    </ligand>
</feature>
<feature type="binding site" description="in other chain" evidence="1">
    <location>
        <position position="215"/>
    </location>
    <ligand>
        <name>IMP</name>
        <dbReference type="ChEBI" id="CHEBI:58053"/>
        <note>ligand shared between dimeric partners</note>
    </ligand>
</feature>
<feature type="binding site" description="in other chain" evidence="1">
    <location>
        <position position="230"/>
    </location>
    <ligand>
        <name>IMP</name>
        <dbReference type="ChEBI" id="CHEBI:58053"/>
        <note>ligand shared between dimeric partners</note>
    </ligand>
</feature>
<feature type="binding site" evidence="1">
    <location>
        <begin position="290"/>
        <end position="296"/>
    </location>
    <ligand>
        <name>substrate</name>
    </ligand>
</feature>
<feature type="binding site" description="in other chain" evidence="1">
    <location>
        <position position="294"/>
    </location>
    <ligand>
        <name>IMP</name>
        <dbReference type="ChEBI" id="CHEBI:58053"/>
        <note>ligand shared between dimeric partners</note>
    </ligand>
</feature>
<feature type="binding site" evidence="1">
    <location>
        <position position="296"/>
    </location>
    <ligand>
        <name>GTP</name>
        <dbReference type="ChEBI" id="CHEBI:37565"/>
    </ligand>
</feature>
<feature type="binding site" evidence="1">
    <location>
        <begin position="322"/>
        <end position="324"/>
    </location>
    <ligand>
        <name>GTP</name>
        <dbReference type="ChEBI" id="CHEBI:37565"/>
    </ligand>
</feature>
<feature type="binding site" evidence="1">
    <location>
        <begin position="400"/>
        <end position="402"/>
    </location>
    <ligand>
        <name>GTP</name>
        <dbReference type="ChEBI" id="CHEBI:37565"/>
    </ligand>
</feature>
<proteinExistence type="inferred from homology"/>
<evidence type="ECO:0000255" key="1">
    <source>
        <dbReference type="HAMAP-Rule" id="MF_00011"/>
    </source>
</evidence>
<gene>
    <name evidence="1" type="primary">purA</name>
    <name type="ordered locus">HPSH_01325</name>
</gene>
<sequence length="411" mass="45774">MADVVVGIQWGDEGKGKIVDRIAKDYDFVVRYQGGHNAGHTIVHKGVKHSLHLMPSGVLYPQCKNIISSAVVVSIKDLCEEISAFEDLENRLFISDRAHVILPYHAKKDAFKEKSQNIGTTKKGIGPCYEDKMARSGIRMGDLLDDKILEERLNAHFKAIEPFKEAYDLGENYEKDLREYFKTHAPKICPFIKDTTSMLIEANQKGEKILLEGAQGTLLDIDLGTYPFVTSSNTTSASACVSTGLNPKAINEVIGITKAYSTRVGNGPFPSEDTTPMGDHLRTKGAEFGTTTKRPRRCGWLDLVALKYACTLNGCTQLALMKLDVLDGIDAIKVCVAYERKGERLEAFPSDLKDCAPIYQTFKGWEKSAGVRKLDDLEPNAREYIRFIEKEVGVKIRLISTSPEREDTIFL</sequence>
<protein>
    <recommendedName>
        <fullName evidence="1">Adenylosuccinate synthetase</fullName>
        <shortName evidence="1">AMPSase</shortName>
        <shortName evidence="1">AdSS</shortName>
        <ecNumber evidence="1">6.3.4.4</ecNumber>
    </recommendedName>
    <alternativeName>
        <fullName evidence="1">IMP--aspartate ligase</fullName>
    </alternativeName>
</protein>
<dbReference type="EC" id="6.3.4.4" evidence="1"/>
<dbReference type="EMBL" id="CP001072">
    <property type="protein sequence ID" value="ACD47719.1"/>
    <property type="molecule type" value="Genomic_DNA"/>
</dbReference>
<dbReference type="RefSeq" id="WP_000796186.1">
    <property type="nucleotide sequence ID" value="NC_010698.2"/>
</dbReference>
<dbReference type="SMR" id="B2US87"/>
<dbReference type="KEGG" id="hps:HPSH_01325"/>
<dbReference type="HOGENOM" id="CLU_029848_0_0_7"/>
<dbReference type="UniPathway" id="UPA00075">
    <property type="reaction ID" value="UER00335"/>
</dbReference>
<dbReference type="GO" id="GO:0005737">
    <property type="term" value="C:cytoplasm"/>
    <property type="evidence" value="ECO:0007669"/>
    <property type="project" value="UniProtKB-SubCell"/>
</dbReference>
<dbReference type="GO" id="GO:0004019">
    <property type="term" value="F:adenylosuccinate synthase activity"/>
    <property type="evidence" value="ECO:0007669"/>
    <property type="project" value="UniProtKB-UniRule"/>
</dbReference>
<dbReference type="GO" id="GO:0005525">
    <property type="term" value="F:GTP binding"/>
    <property type="evidence" value="ECO:0007669"/>
    <property type="project" value="UniProtKB-UniRule"/>
</dbReference>
<dbReference type="GO" id="GO:0000287">
    <property type="term" value="F:magnesium ion binding"/>
    <property type="evidence" value="ECO:0007669"/>
    <property type="project" value="UniProtKB-UniRule"/>
</dbReference>
<dbReference type="GO" id="GO:0044208">
    <property type="term" value="P:'de novo' AMP biosynthetic process"/>
    <property type="evidence" value="ECO:0007669"/>
    <property type="project" value="UniProtKB-UniRule"/>
</dbReference>
<dbReference type="GO" id="GO:0046040">
    <property type="term" value="P:IMP metabolic process"/>
    <property type="evidence" value="ECO:0007669"/>
    <property type="project" value="TreeGrafter"/>
</dbReference>
<dbReference type="CDD" id="cd03108">
    <property type="entry name" value="AdSS"/>
    <property type="match status" value="1"/>
</dbReference>
<dbReference type="FunFam" id="1.10.300.10:FF:000001">
    <property type="entry name" value="Adenylosuccinate synthetase"/>
    <property type="match status" value="1"/>
</dbReference>
<dbReference type="FunFam" id="3.90.170.10:FF:000004">
    <property type="entry name" value="Adenylosuccinate synthetase"/>
    <property type="match status" value="1"/>
</dbReference>
<dbReference type="Gene3D" id="3.40.440.10">
    <property type="entry name" value="Adenylosuccinate Synthetase, subunit A, domain 1"/>
    <property type="match status" value="1"/>
</dbReference>
<dbReference type="Gene3D" id="1.10.300.10">
    <property type="entry name" value="Adenylosuccinate Synthetase, subunit A, domain 2"/>
    <property type="match status" value="1"/>
</dbReference>
<dbReference type="Gene3D" id="3.90.170.10">
    <property type="entry name" value="Adenylosuccinate Synthetase, subunit A, domain 3"/>
    <property type="match status" value="1"/>
</dbReference>
<dbReference type="HAMAP" id="MF_00011">
    <property type="entry name" value="Adenylosucc_synth"/>
    <property type="match status" value="1"/>
</dbReference>
<dbReference type="InterPro" id="IPR018220">
    <property type="entry name" value="Adenylosuccin_syn_GTP-bd"/>
</dbReference>
<dbReference type="InterPro" id="IPR033128">
    <property type="entry name" value="Adenylosuccin_syn_Lys_AS"/>
</dbReference>
<dbReference type="InterPro" id="IPR042109">
    <property type="entry name" value="Adenylosuccinate_synth_dom1"/>
</dbReference>
<dbReference type="InterPro" id="IPR042110">
    <property type="entry name" value="Adenylosuccinate_synth_dom2"/>
</dbReference>
<dbReference type="InterPro" id="IPR042111">
    <property type="entry name" value="Adenylosuccinate_synth_dom3"/>
</dbReference>
<dbReference type="InterPro" id="IPR001114">
    <property type="entry name" value="Adenylosuccinate_synthetase"/>
</dbReference>
<dbReference type="InterPro" id="IPR027417">
    <property type="entry name" value="P-loop_NTPase"/>
</dbReference>
<dbReference type="NCBIfam" id="NF002223">
    <property type="entry name" value="PRK01117.1"/>
    <property type="match status" value="1"/>
</dbReference>
<dbReference type="NCBIfam" id="TIGR00184">
    <property type="entry name" value="purA"/>
    <property type="match status" value="1"/>
</dbReference>
<dbReference type="PANTHER" id="PTHR11846">
    <property type="entry name" value="ADENYLOSUCCINATE SYNTHETASE"/>
    <property type="match status" value="1"/>
</dbReference>
<dbReference type="PANTHER" id="PTHR11846:SF0">
    <property type="entry name" value="ADENYLOSUCCINATE SYNTHETASE"/>
    <property type="match status" value="1"/>
</dbReference>
<dbReference type="Pfam" id="PF00709">
    <property type="entry name" value="Adenylsucc_synt"/>
    <property type="match status" value="1"/>
</dbReference>
<dbReference type="SMART" id="SM00788">
    <property type="entry name" value="Adenylsucc_synt"/>
    <property type="match status" value="1"/>
</dbReference>
<dbReference type="SUPFAM" id="SSF52540">
    <property type="entry name" value="P-loop containing nucleoside triphosphate hydrolases"/>
    <property type="match status" value="1"/>
</dbReference>
<dbReference type="PROSITE" id="PS01266">
    <property type="entry name" value="ADENYLOSUCCIN_SYN_1"/>
    <property type="match status" value="1"/>
</dbReference>
<dbReference type="PROSITE" id="PS00513">
    <property type="entry name" value="ADENYLOSUCCIN_SYN_2"/>
    <property type="match status" value="1"/>
</dbReference>
<keyword id="KW-0963">Cytoplasm</keyword>
<keyword id="KW-0342">GTP-binding</keyword>
<keyword id="KW-0436">Ligase</keyword>
<keyword id="KW-0460">Magnesium</keyword>
<keyword id="KW-0479">Metal-binding</keyword>
<keyword id="KW-0547">Nucleotide-binding</keyword>
<keyword id="KW-0658">Purine biosynthesis</keyword>
<comment type="function">
    <text evidence="1">Plays an important role in the de novo pathway of purine nucleotide biosynthesis. Catalyzes the first committed step in the biosynthesis of AMP from IMP.</text>
</comment>
<comment type="catalytic activity">
    <reaction evidence="1">
        <text>IMP + L-aspartate + GTP = N(6)-(1,2-dicarboxyethyl)-AMP + GDP + phosphate + 2 H(+)</text>
        <dbReference type="Rhea" id="RHEA:15753"/>
        <dbReference type="ChEBI" id="CHEBI:15378"/>
        <dbReference type="ChEBI" id="CHEBI:29991"/>
        <dbReference type="ChEBI" id="CHEBI:37565"/>
        <dbReference type="ChEBI" id="CHEBI:43474"/>
        <dbReference type="ChEBI" id="CHEBI:57567"/>
        <dbReference type="ChEBI" id="CHEBI:58053"/>
        <dbReference type="ChEBI" id="CHEBI:58189"/>
        <dbReference type="EC" id="6.3.4.4"/>
    </reaction>
</comment>
<comment type="cofactor">
    <cofactor evidence="1">
        <name>Mg(2+)</name>
        <dbReference type="ChEBI" id="CHEBI:18420"/>
    </cofactor>
    <text evidence="1">Binds 1 Mg(2+) ion per subunit.</text>
</comment>
<comment type="pathway">
    <text evidence="1">Purine metabolism; AMP biosynthesis via de novo pathway; AMP from IMP: step 1/2.</text>
</comment>
<comment type="subunit">
    <text evidence="1">Homodimer.</text>
</comment>
<comment type="subcellular location">
    <subcellularLocation>
        <location evidence="1">Cytoplasm</location>
    </subcellularLocation>
</comment>
<comment type="similarity">
    <text evidence="1">Belongs to the adenylosuccinate synthetase family.</text>
</comment>
<accession>B2US87</accession>
<reference key="1">
    <citation type="submission" date="2008-05" db="EMBL/GenBank/DDBJ databases">
        <title>Genome sequence of Helicobacter pylori from the remote Amazon: traces of Asian ancestry of the first Americans.</title>
        <authorList>
            <person name="Kersulyte D."/>
            <person name="Kalia A."/>
            <person name="Gilman R.H."/>
            <person name="Berg D.E."/>
        </authorList>
    </citation>
    <scope>NUCLEOTIDE SEQUENCE [LARGE SCALE GENOMIC DNA]</scope>
    <source>
        <strain>Shi470</strain>
    </source>
</reference>
<name>PURA_HELPS</name>
<organism>
    <name type="scientific">Helicobacter pylori (strain Shi470)</name>
    <dbReference type="NCBI Taxonomy" id="512562"/>
    <lineage>
        <taxon>Bacteria</taxon>
        <taxon>Pseudomonadati</taxon>
        <taxon>Campylobacterota</taxon>
        <taxon>Epsilonproteobacteria</taxon>
        <taxon>Campylobacterales</taxon>
        <taxon>Helicobacteraceae</taxon>
        <taxon>Helicobacter</taxon>
    </lineage>
</organism>